<gene>
    <name evidence="1" type="primary">deoC</name>
    <name type="ordered locus">LL1440</name>
    <name type="ORF">L63310</name>
</gene>
<protein>
    <recommendedName>
        <fullName evidence="1">Deoxyribose-phosphate aldolase</fullName>
        <shortName evidence="1">DERA</shortName>
        <ecNumber evidence="1">4.1.2.4</ecNumber>
    </recommendedName>
    <alternativeName>
        <fullName evidence="1">2-deoxy-D-ribose 5-phosphate aldolase</fullName>
    </alternativeName>
    <alternativeName>
        <fullName evidence="1">Phosphodeoxyriboaldolase</fullName>
        <shortName evidence="1">Deoxyriboaldolase</shortName>
    </alternativeName>
</protein>
<sequence>MQINKYIDHTILKADAPKSKVQQIIDEAKKYDFMSVCINPTWVSYASQELKDSDVKVCTVIGFPLGANTSELKAFEAKNAIENGADEIDMVINIGAAKSKDWNLVESDIAAVNAVKGDKLLKVIIETSLLTDDEKIKACQIAKAVGADFVKTSTGFSTGGATVHDVKLMRQTVGPDMGVKASGGVHNLEEAKAMIDAGATRLGVSAGVAIMEGLTSNDNY</sequence>
<name>DEOC_LACLA</name>
<feature type="chain" id="PRO_0000057235" description="Deoxyribose-phosphate aldolase">
    <location>
        <begin position="1"/>
        <end position="220"/>
    </location>
</feature>
<feature type="active site" description="Proton donor/acceptor" evidence="1">
    <location>
        <position position="89"/>
    </location>
</feature>
<feature type="active site" description="Schiff-base intermediate with acetaldehyde" evidence="1">
    <location>
        <position position="151"/>
    </location>
</feature>
<feature type="active site" description="Proton donor/acceptor" evidence="1">
    <location>
        <position position="180"/>
    </location>
</feature>
<proteinExistence type="inferred from homology"/>
<dbReference type="EC" id="4.1.2.4" evidence="1"/>
<dbReference type="EMBL" id="AE005176">
    <property type="protein sequence ID" value="AAK05538.1"/>
    <property type="molecule type" value="Genomic_DNA"/>
</dbReference>
<dbReference type="PIR" id="H86804">
    <property type="entry name" value="H86804"/>
</dbReference>
<dbReference type="RefSeq" id="NP_267596.1">
    <property type="nucleotide sequence ID" value="NC_002662.1"/>
</dbReference>
<dbReference type="RefSeq" id="WP_003130468.1">
    <property type="nucleotide sequence ID" value="NC_002662.1"/>
</dbReference>
<dbReference type="SMR" id="Q9CFM7"/>
<dbReference type="PaxDb" id="272623-L63310"/>
<dbReference type="EnsemblBacteria" id="AAK05538">
    <property type="protein sequence ID" value="AAK05538"/>
    <property type="gene ID" value="L63310"/>
</dbReference>
<dbReference type="KEGG" id="lla:L63310"/>
<dbReference type="PATRIC" id="fig|272623.7.peg.1548"/>
<dbReference type="eggNOG" id="COG0274">
    <property type="taxonomic scope" value="Bacteria"/>
</dbReference>
<dbReference type="HOGENOM" id="CLU_053595_0_1_9"/>
<dbReference type="OrthoDB" id="9778711at2"/>
<dbReference type="UniPathway" id="UPA00002">
    <property type="reaction ID" value="UER00468"/>
</dbReference>
<dbReference type="Proteomes" id="UP000002196">
    <property type="component" value="Chromosome"/>
</dbReference>
<dbReference type="GO" id="GO:0005737">
    <property type="term" value="C:cytoplasm"/>
    <property type="evidence" value="ECO:0007669"/>
    <property type="project" value="UniProtKB-SubCell"/>
</dbReference>
<dbReference type="GO" id="GO:0004139">
    <property type="term" value="F:deoxyribose-phosphate aldolase activity"/>
    <property type="evidence" value="ECO:0007669"/>
    <property type="project" value="UniProtKB-UniRule"/>
</dbReference>
<dbReference type="GO" id="GO:0006018">
    <property type="term" value="P:2-deoxyribose 1-phosphate catabolic process"/>
    <property type="evidence" value="ECO:0007669"/>
    <property type="project" value="UniProtKB-UniRule"/>
</dbReference>
<dbReference type="GO" id="GO:0016052">
    <property type="term" value="P:carbohydrate catabolic process"/>
    <property type="evidence" value="ECO:0007669"/>
    <property type="project" value="TreeGrafter"/>
</dbReference>
<dbReference type="GO" id="GO:0009264">
    <property type="term" value="P:deoxyribonucleotide catabolic process"/>
    <property type="evidence" value="ECO:0007669"/>
    <property type="project" value="InterPro"/>
</dbReference>
<dbReference type="CDD" id="cd00959">
    <property type="entry name" value="DeoC"/>
    <property type="match status" value="1"/>
</dbReference>
<dbReference type="FunFam" id="3.20.20.70:FF:000044">
    <property type="entry name" value="Deoxyribose-phosphate aldolase"/>
    <property type="match status" value="1"/>
</dbReference>
<dbReference type="Gene3D" id="3.20.20.70">
    <property type="entry name" value="Aldolase class I"/>
    <property type="match status" value="1"/>
</dbReference>
<dbReference type="HAMAP" id="MF_00114">
    <property type="entry name" value="DeoC_type1"/>
    <property type="match status" value="1"/>
</dbReference>
<dbReference type="InterPro" id="IPR013785">
    <property type="entry name" value="Aldolase_TIM"/>
</dbReference>
<dbReference type="InterPro" id="IPR011343">
    <property type="entry name" value="DeoC"/>
</dbReference>
<dbReference type="InterPro" id="IPR002915">
    <property type="entry name" value="DeoC/FbaB/LacD_aldolase"/>
</dbReference>
<dbReference type="InterPro" id="IPR028581">
    <property type="entry name" value="DeoC_typeI"/>
</dbReference>
<dbReference type="NCBIfam" id="TIGR00126">
    <property type="entry name" value="deoC"/>
    <property type="match status" value="1"/>
</dbReference>
<dbReference type="PANTHER" id="PTHR10889">
    <property type="entry name" value="DEOXYRIBOSE-PHOSPHATE ALDOLASE"/>
    <property type="match status" value="1"/>
</dbReference>
<dbReference type="PANTHER" id="PTHR10889:SF1">
    <property type="entry name" value="DEOXYRIBOSE-PHOSPHATE ALDOLASE"/>
    <property type="match status" value="1"/>
</dbReference>
<dbReference type="Pfam" id="PF01791">
    <property type="entry name" value="DeoC"/>
    <property type="match status" value="1"/>
</dbReference>
<dbReference type="PIRSF" id="PIRSF001357">
    <property type="entry name" value="DeoC"/>
    <property type="match status" value="1"/>
</dbReference>
<dbReference type="SMART" id="SM01133">
    <property type="entry name" value="DeoC"/>
    <property type="match status" value="1"/>
</dbReference>
<dbReference type="SUPFAM" id="SSF51569">
    <property type="entry name" value="Aldolase"/>
    <property type="match status" value="1"/>
</dbReference>
<evidence type="ECO:0000255" key="1">
    <source>
        <dbReference type="HAMAP-Rule" id="MF_00114"/>
    </source>
</evidence>
<evidence type="ECO:0000305" key="2"/>
<accession>Q9CFM7</accession>
<keyword id="KW-0963">Cytoplasm</keyword>
<keyword id="KW-0456">Lyase</keyword>
<keyword id="KW-1185">Reference proteome</keyword>
<keyword id="KW-0704">Schiff base</keyword>
<reference key="1">
    <citation type="journal article" date="2001" name="Genome Res.">
        <title>The complete genome sequence of the lactic acid bacterium Lactococcus lactis ssp. lactis IL1403.</title>
        <authorList>
            <person name="Bolotin A."/>
            <person name="Wincker P."/>
            <person name="Mauger S."/>
            <person name="Jaillon O."/>
            <person name="Malarme K."/>
            <person name="Weissenbach J."/>
            <person name="Ehrlich S.D."/>
            <person name="Sorokin A."/>
        </authorList>
    </citation>
    <scope>NUCLEOTIDE SEQUENCE [LARGE SCALE GENOMIC DNA]</scope>
    <source>
        <strain>IL1403</strain>
    </source>
</reference>
<comment type="function">
    <text evidence="1">Catalyzes a reversible aldol reaction between acetaldehyde and D-glyceraldehyde 3-phosphate to generate 2-deoxy-D-ribose 5-phosphate.</text>
</comment>
<comment type="catalytic activity">
    <reaction evidence="1">
        <text>2-deoxy-D-ribose 5-phosphate = D-glyceraldehyde 3-phosphate + acetaldehyde</text>
        <dbReference type="Rhea" id="RHEA:12821"/>
        <dbReference type="ChEBI" id="CHEBI:15343"/>
        <dbReference type="ChEBI" id="CHEBI:59776"/>
        <dbReference type="ChEBI" id="CHEBI:62877"/>
        <dbReference type="EC" id="4.1.2.4"/>
    </reaction>
</comment>
<comment type="pathway">
    <text evidence="1">Carbohydrate degradation; 2-deoxy-D-ribose 1-phosphate degradation; D-glyceraldehyde 3-phosphate and acetaldehyde from 2-deoxy-alpha-D-ribose 1-phosphate: step 2/2.</text>
</comment>
<comment type="subcellular location">
    <subcellularLocation>
        <location evidence="1">Cytoplasm</location>
    </subcellularLocation>
</comment>
<comment type="similarity">
    <text evidence="1 2">Belongs to the DeoC/FbaB aldolase family. DeoC type 1 subfamily.</text>
</comment>
<organism>
    <name type="scientific">Lactococcus lactis subsp. lactis (strain IL1403)</name>
    <name type="common">Streptococcus lactis</name>
    <dbReference type="NCBI Taxonomy" id="272623"/>
    <lineage>
        <taxon>Bacteria</taxon>
        <taxon>Bacillati</taxon>
        <taxon>Bacillota</taxon>
        <taxon>Bacilli</taxon>
        <taxon>Lactobacillales</taxon>
        <taxon>Streptococcaceae</taxon>
        <taxon>Lactococcus</taxon>
    </lineage>
</organism>